<gene>
    <name evidence="1" type="primary">mtaD</name>
    <name type="ordered locus">LI0478</name>
</gene>
<evidence type="ECO:0000255" key="1">
    <source>
        <dbReference type="HAMAP-Rule" id="MF_01281"/>
    </source>
</evidence>
<evidence type="ECO:0000305" key="2"/>
<organism>
    <name type="scientific">Lawsonia intracellularis (strain PHE/MN1-00)</name>
    <dbReference type="NCBI Taxonomy" id="363253"/>
    <lineage>
        <taxon>Bacteria</taxon>
        <taxon>Pseudomonadati</taxon>
        <taxon>Thermodesulfobacteriota</taxon>
        <taxon>Desulfovibrionia</taxon>
        <taxon>Desulfovibrionales</taxon>
        <taxon>Desulfovibrionaceae</taxon>
        <taxon>Lawsonia</taxon>
    </lineage>
</organism>
<comment type="function">
    <text evidence="1">Catalyzes the deamination of 5-methylthioadenosine and S-adenosyl-L-homocysteine into 5-methylthioinosine and S-inosyl-L-homocysteine, respectively. Is also able to deaminate adenosine.</text>
</comment>
<comment type="catalytic activity">
    <reaction evidence="1">
        <text>S-adenosyl-L-homocysteine + H2O + H(+) = S-inosyl-L-homocysteine + NH4(+)</text>
        <dbReference type="Rhea" id="RHEA:20716"/>
        <dbReference type="ChEBI" id="CHEBI:15377"/>
        <dbReference type="ChEBI" id="CHEBI:15378"/>
        <dbReference type="ChEBI" id="CHEBI:28938"/>
        <dbReference type="ChEBI" id="CHEBI:57856"/>
        <dbReference type="ChEBI" id="CHEBI:57985"/>
        <dbReference type="EC" id="3.5.4.28"/>
    </reaction>
</comment>
<comment type="catalytic activity">
    <reaction evidence="1">
        <text>S-methyl-5'-thioadenosine + H2O + H(+) = S-methyl-5'-thioinosine + NH4(+)</text>
        <dbReference type="Rhea" id="RHEA:25025"/>
        <dbReference type="ChEBI" id="CHEBI:15377"/>
        <dbReference type="ChEBI" id="CHEBI:15378"/>
        <dbReference type="ChEBI" id="CHEBI:17509"/>
        <dbReference type="ChEBI" id="CHEBI:28938"/>
        <dbReference type="ChEBI" id="CHEBI:48595"/>
        <dbReference type="EC" id="3.5.4.31"/>
    </reaction>
</comment>
<comment type="cofactor">
    <cofactor evidence="1">
        <name>Zn(2+)</name>
        <dbReference type="ChEBI" id="CHEBI:29105"/>
    </cofactor>
    <text evidence="1">Binds 1 zinc ion per subunit.</text>
</comment>
<comment type="similarity">
    <text evidence="1">Belongs to the metallo-dependent hydrolases superfamily. MTA/SAH deaminase family.</text>
</comment>
<comment type="sequence caution" evidence="2">
    <conflict type="erroneous initiation">
        <sequence resource="EMBL-CDS" id="CAJ54532"/>
    </conflict>
</comment>
<protein>
    <recommendedName>
        <fullName evidence="1">5-methylthioadenosine/S-adenosylhomocysteine deaminase</fullName>
        <shortName evidence="1">MTA/SAH deaminase</shortName>
        <ecNumber evidence="1">3.5.4.28</ecNumber>
        <ecNumber evidence="1">3.5.4.31</ecNumber>
    </recommendedName>
</protein>
<name>MTAD_LAWIP</name>
<feature type="chain" id="PRO_0000312456" description="5-methylthioadenosine/S-adenosylhomocysteine deaminase">
    <location>
        <begin position="1"/>
        <end position="441"/>
    </location>
</feature>
<feature type="binding site" evidence="1">
    <location>
        <position position="70"/>
    </location>
    <ligand>
        <name>Zn(2+)</name>
        <dbReference type="ChEBI" id="CHEBI:29105"/>
    </ligand>
</feature>
<feature type="binding site" evidence="1">
    <location>
        <position position="72"/>
    </location>
    <ligand>
        <name>Zn(2+)</name>
        <dbReference type="ChEBI" id="CHEBI:29105"/>
    </ligand>
</feature>
<feature type="binding site" evidence="1">
    <location>
        <position position="99"/>
    </location>
    <ligand>
        <name>substrate</name>
    </ligand>
</feature>
<feature type="binding site" evidence="1">
    <location>
        <position position="191"/>
    </location>
    <ligand>
        <name>substrate</name>
    </ligand>
</feature>
<feature type="binding site" evidence="1">
    <location>
        <position position="218"/>
    </location>
    <ligand>
        <name>Zn(2+)</name>
        <dbReference type="ChEBI" id="CHEBI:29105"/>
    </ligand>
</feature>
<feature type="binding site" evidence="1">
    <location>
        <position position="221"/>
    </location>
    <ligand>
        <name>substrate</name>
    </ligand>
</feature>
<feature type="binding site" evidence="1">
    <location>
        <position position="306"/>
    </location>
    <ligand>
        <name>substrate</name>
    </ligand>
</feature>
<feature type="binding site" evidence="1">
    <location>
        <position position="306"/>
    </location>
    <ligand>
        <name>Zn(2+)</name>
        <dbReference type="ChEBI" id="CHEBI:29105"/>
    </ligand>
</feature>
<reference key="1">
    <citation type="submission" date="2005-11" db="EMBL/GenBank/DDBJ databases">
        <title>The complete genome sequence of Lawsonia intracellularis: the causative agent of proliferative enteropathy.</title>
        <authorList>
            <person name="Kaur K."/>
            <person name="Zhang Q."/>
            <person name="Beckler D."/>
            <person name="Munir S."/>
            <person name="Li L."/>
            <person name="Kinsley K."/>
            <person name="Herron L."/>
            <person name="Peterson A."/>
            <person name="May B."/>
            <person name="Singh S."/>
            <person name="Gebhart C."/>
            <person name="Kapur V."/>
        </authorList>
    </citation>
    <scope>NUCLEOTIDE SEQUENCE [LARGE SCALE GENOMIC DNA]</scope>
    <source>
        <strain>PHE/MN1-00</strain>
    </source>
</reference>
<dbReference type="EC" id="3.5.4.28" evidence="1"/>
<dbReference type="EC" id="3.5.4.31" evidence="1"/>
<dbReference type="EMBL" id="AM180252">
    <property type="protein sequence ID" value="CAJ54532.1"/>
    <property type="status" value="ALT_INIT"/>
    <property type="molecule type" value="Genomic_DNA"/>
</dbReference>
<dbReference type="RefSeq" id="WP_015353741.1">
    <property type="nucleotide sequence ID" value="NC_008011.1"/>
</dbReference>
<dbReference type="SMR" id="Q1MR44"/>
<dbReference type="STRING" id="363253.LI0478"/>
<dbReference type="KEGG" id="lip:LI0478"/>
<dbReference type="eggNOG" id="COG0402">
    <property type="taxonomic scope" value="Bacteria"/>
</dbReference>
<dbReference type="HOGENOM" id="CLU_012358_2_1_7"/>
<dbReference type="OrthoDB" id="9807210at2"/>
<dbReference type="Proteomes" id="UP000002430">
    <property type="component" value="Chromosome"/>
</dbReference>
<dbReference type="GO" id="GO:0090614">
    <property type="term" value="F:5'-methylthioadenosine deaminase activity"/>
    <property type="evidence" value="ECO:0007669"/>
    <property type="project" value="UniProtKB-UniRule"/>
</dbReference>
<dbReference type="GO" id="GO:0046872">
    <property type="term" value="F:metal ion binding"/>
    <property type="evidence" value="ECO:0007669"/>
    <property type="project" value="UniProtKB-KW"/>
</dbReference>
<dbReference type="GO" id="GO:0050270">
    <property type="term" value="F:S-adenosylhomocysteine deaminase activity"/>
    <property type="evidence" value="ECO:0007669"/>
    <property type="project" value="UniProtKB-UniRule"/>
</dbReference>
<dbReference type="CDD" id="cd01298">
    <property type="entry name" value="ATZ_TRZ_like"/>
    <property type="match status" value="1"/>
</dbReference>
<dbReference type="FunFam" id="3.20.20.140:FF:000014">
    <property type="entry name" value="5-methylthioadenosine/S-adenosylhomocysteine deaminase"/>
    <property type="match status" value="1"/>
</dbReference>
<dbReference type="Gene3D" id="3.20.20.140">
    <property type="entry name" value="Metal-dependent hydrolases"/>
    <property type="match status" value="1"/>
</dbReference>
<dbReference type="Gene3D" id="2.30.40.10">
    <property type="entry name" value="Urease, subunit C, domain 1"/>
    <property type="match status" value="1"/>
</dbReference>
<dbReference type="HAMAP" id="MF_01281">
    <property type="entry name" value="MTA_SAH_deamin"/>
    <property type="match status" value="1"/>
</dbReference>
<dbReference type="InterPro" id="IPR006680">
    <property type="entry name" value="Amidohydro-rel"/>
</dbReference>
<dbReference type="InterPro" id="IPR023512">
    <property type="entry name" value="Deaminase_MtaD/DadD"/>
</dbReference>
<dbReference type="InterPro" id="IPR011059">
    <property type="entry name" value="Metal-dep_hydrolase_composite"/>
</dbReference>
<dbReference type="InterPro" id="IPR032466">
    <property type="entry name" value="Metal_Hydrolase"/>
</dbReference>
<dbReference type="InterPro" id="IPR050287">
    <property type="entry name" value="MTA/SAH_deaminase"/>
</dbReference>
<dbReference type="PANTHER" id="PTHR43794:SF11">
    <property type="entry name" value="AMIDOHYDROLASE-RELATED DOMAIN-CONTAINING PROTEIN"/>
    <property type="match status" value="1"/>
</dbReference>
<dbReference type="PANTHER" id="PTHR43794">
    <property type="entry name" value="AMINOHYDROLASE SSNA-RELATED"/>
    <property type="match status" value="1"/>
</dbReference>
<dbReference type="Pfam" id="PF01979">
    <property type="entry name" value="Amidohydro_1"/>
    <property type="match status" value="1"/>
</dbReference>
<dbReference type="SUPFAM" id="SSF51338">
    <property type="entry name" value="Composite domain of metallo-dependent hydrolases"/>
    <property type="match status" value="1"/>
</dbReference>
<dbReference type="SUPFAM" id="SSF51556">
    <property type="entry name" value="Metallo-dependent hydrolases"/>
    <property type="match status" value="1"/>
</dbReference>
<accession>Q1MR44</accession>
<proteinExistence type="inferred from homology"/>
<keyword id="KW-0378">Hydrolase</keyword>
<keyword id="KW-0479">Metal-binding</keyword>
<keyword id="KW-1185">Reference proteome</keyword>
<keyword id="KW-0862">Zinc</keyword>
<sequence>MAQLCDTIIHAHCIVTQNKERVILYNGSLAITSGNIVALGPKEEICSFWDAKETLDLCNMLVMPGLINAHTHVAMTFFRGLADDLPLMEWLKSYIFPIERHLTPETVRWSSLLGYAEMLRTGTTACLDMYFFEDVVFEAAIKAGIRCTGGESIFVFPSVSCDTAKTALEHTKKMAELYSDNTRINVVVNPHSVYTTTPQVLSQCIEVAEECSLPLHIHLSETTTETQICLQKYGLRPVSYCRDLGILTPRTTLAHVVDVNLEELTCLAEHGCVISHNPSSNMKLASGVSPIPEMIKRNLSVGLGTDGAASNNCLNMFMEMGRCALLHKVYWNNPTALFAQTVLDMATLGGAAAIHQPKLGVLAPGHPADLIALDMSMPNLQPMFNPISHLIYATTGMEVFLTMVEGEILYYNGTFTRFDYDSLSNEMKKVSHWVKEKLQLL</sequence>